<name>GCSH3_ARATH</name>
<keyword id="KW-0318">Glutathionylation</keyword>
<keyword id="KW-0450">Lipoyl</keyword>
<keyword id="KW-0496">Mitochondrion</keyword>
<keyword id="KW-0597">Phosphoprotein</keyword>
<keyword id="KW-1185">Reference proteome</keyword>
<keyword id="KW-0702">S-nitrosylation</keyword>
<keyword id="KW-0809">Transit peptide</keyword>
<feature type="transit peptide" description="Mitochondrion" evidence="6">
    <location>
        <begin position="1"/>
        <end position="35"/>
    </location>
</feature>
<feature type="chain" id="PRO_0000010730" description="Glycine cleavage system H protein 3, mitochondrial">
    <location>
        <begin position="36"/>
        <end position="166"/>
    </location>
</feature>
<feature type="domain" description="Lipoyl-binding" evidence="3">
    <location>
        <begin position="57"/>
        <end position="139"/>
    </location>
</feature>
<feature type="modified residue" description="N6-lipoyllysine" evidence="1 3">
    <location>
        <position position="98"/>
    </location>
</feature>
<feature type="modified residue" description="Phosphoserine" evidence="2">
    <location>
        <position position="141"/>
    </location>
</feature>
<accession>Q9LQL0</accession>
<proteinExistence type="evidence at protein level"/>
<protein>
    <recommendedName>
        <fullName>Glycine cleavage system H protein 3, mitochondrial</fullName>
    </recommendedName>
</protein>
<gene>
    <name type="primary">GDH3</name>
    <name type="ordered locus">At1g32470</name>
    <name type="ORF">F5D14.25</name>
</gene>
<reference key="1">
    <citation type="journal article" date="2000" name="Nature">
        <title>Sequence and analysis of chromosome 1 of the plant Arabidopsis thaliana.</title>
        <authorList>
            <person name="Theologis A."/>
            <person name="Ecker J.R."/>
            <person name="Palm C.J."/>
            <person name="Federspiel N.A."/>
            <person name="Kaul S."/>
            <person name="White O."/>
            <person name="Alonso J."/>
            <person name="Altafi H."/>
            <person name="Araujo R."/>
            <person name="Bowman C.L."/>
            <person name="Brooks S.Y."/>
            <person name="Buehler E."/>
            <person name="Chan A."/>
            <person name="Chao Q."/>
            <person name="Chen H."/>
            <person name="Cheuk R.F."/>
            <person name="Chin C.W."/>
            <person name="Chung M.K."/>
            <person name="Conn L."/>
            <person name="Conway A.B."/>
            <person name="Conway A.R."/>
            <person name="Creasy T.H."/>
            <person name="Dewar K."/>
            <person name="Dunn P."/>
            <person name="Etgu P."/>
            <person name="Feldblyum T.V."/>
            <person name="Feng J.-D."/>
            <person name="Fong B."/>
            <person name="Fujii C.Y."/>
            <person name="Gill J.E."/>
            <person name="Goldsmith A.D."/>
            <person name="Haas B."/>
            <person name="Hansen N.F."/>
            <person name="Hughes B."/>
            <person name="Huizar L."/>
            <person name="Hunter J.L."/>
            <person name="Jenkins J."/>
            <person name="Johnson-Hopson C."/>
            <person name="Khan S."/>
            <person name="Khaykin E."/>
            <person name="Kim C.J."/>
            <person name="Koo H.L."/>
            <person name="Kremenetskaia I."/>
            <person name="Kurtz D.B."/>
            <person name="Kwan A."/>
            <person name="Lam B."/>
            <person name="Langin-Hooper S."/>
            <person name="Lee A."/>
            <person name="Lee J.M."/>
            <person name="Lenz C.A."/>
            <person name="Li J.H."/>
            <person name="Li Y.-P."/>
            <person name="Lin X."/>
            <person name="Liu S.X."/>
            <person name="Liu Z.A."/>
            <person name="Luros J.S."/>
            <person name="Maiti R."/>
            <person name="Marziali A."/>
            <person name="Militscher J."/>
            <person name="Miranda M."/>
            <person name="Nguyen M."/>
            <person name="Nierman W.C."/>
            <person name="Osborne B.I."/>
            <person name="Pai G."/>
            <person name="Peterson J."/>
            <person name="Pham P.K."/>
            <person name="Rizzo M."/>
            <person name="Rooney T."/>
            <person name="Rowley D."/>
            <person name="Sakano H."/>
            <person name="Salzberg S.L."/>
            <person name="Schwartz J.R."/>
            <person name="Shinn P."/>
            <person name="Southwick A.M."/>
            <person name="Sun H."/>
            <person name="Tallon L.J."/>
            <person name="Tambunga G."/>
            <person name="Toriumi M.J."/>
            <person name="Town C.D."/>
            <person name="Utterback T."/>
            <person name="Van Aken S."/>
            <person name="Vaysberg M."/>
            <person name="Vysotskaia V.S."/>
            <person name="Walker M."/>
            <person name="Wu D."/>
            <person name="Yu G."/>
            <person name="Fraser C.M."/>
            <person name="Venter J.C."/>
            <person name="Davis R.W."/>
        </authorList>
    </citation>
    <scope>NUCLEOTIDE SEQUENCE [LARGE SCALE GENOMIC DNA]</scope>
    <source>
        <strain>cv. Columbia</strain>
    </source>
</reference>
<reference key="2">
    <citation type="journal article" date="2017" name="Plant J.">
        <title>Araport11: a complete reannotation of the Arabidopsis thaliana reference genome.</title>
        <authorList>
            <person name="Cheng C.Y."/>
            <person name="Krishnakumar V."/>
            <person name="Chan A.P."/>
            <person name="Thibaud-Nissen F."/>
            <person name="Schobel S."/>
            <person name="Town C.D."/>
        </authorList>
    </citation>
    <scope>GENOME REANNOTATION</scope>
    <source>
        <strain>cv. Columbia</strain>
    </source>
</reference>
<reference key="3">
    <citation type="journal article" date="2003" name="Science">
        <title>Empirical analysis of transcriptional activity in the Arabidopsis genome.</title>
        <authorList>
            <person name="Yamada K."/>
            <person name="Lim J."/>
            <person name="Dale J.M."/>
            <person name="Chen H."/>
            <person name="Shinn P."/>
            <person name="Palm C.J."/>
            <person name="Southwick A.M."/>
            <person name="Wu H.C."/>
            <person name="Kim C.J."/>
            <person name="Nguyen M."/>
            <person name="Pham P.K."/>
            <person name="Cheuk R.F."/>
            <person name="Karlin-Newmann G."/>
            <person name="Liu S.X."/>
            <person name="Lam B."/>
            <person name="Sakano H."/>
            <person name="Wu T."/>
            <person name="Yu G."/>
            <person name="Miranda M."/>
            <person name="Quach H.L."/>
            <person name="Tripp M."/>
            <person name="Chang C.H."/>
            <person name="Lee J.M."/>
            <person name="Toriumi M.J."/>
            <person name="Chan M.M."/>
            <person name="Tang C.C."/>
            <person name="Onodera C.S."/>
            <person name="Deng J.M."/>
            <person name="Akiyama K."/>
            <person name="Ansari Y."/>
            <person name="Arakawa T."/>
            <person name="Banh J."/>
            <person name="Banno F."/>
            <person name="Bowser L."/>
            <person name="Brooks S.Y."/>
            <person name="Carninci P."/>
            <person name="Chao Q."/>
            <person name="Choy N."/>
            <person name="Enju A."/>
            <person name="Goldsmith A.D."/>
            <person name="Gurjal M."/>
            <person name="Hansen N.F."/>
            <person name="Hayashizaki Y."/>
            <person name="Johnson-Hopson C."/>
            <person name="Hsuan V.W."/>
            <person name="Iida K."/>
            <person name="Karnes M."/>
            <person name="Khan S."/>
            <person name="Koesema E."/>
            <person name="Ishida J."/>
            <person name="Jiang P.X."/>
            <person name="Jones T."/>
            <person name="Kawai J."/>
            <person name="Kamiya A."/>
            <person name="Meyers C."/>
            <person name="Nakajima M."/>
            <person name="Narusaka M."/>
            <person name="Seki M."/>
            <person name="Sakurai T."/>
            <person name="Satou M."/>
            <person name="Tamse R."/>
            <person name="Vaysberg M."/>
            <person name="Wallender E.K."/>
            <person name="Wong C."/>
            <person name="Yamamura Y."/>
            <person name="Yuan S."/>
            <person name="Shinozaki K."/>
            <person name="Davis R.W."/>
            <person name="Theologis A."/>
            <person name="Ecker J.R."/>
        </authorList>
    </citation>
    <scope>NUCLEOTIDE SEQUENCE [LARGE SCALE MRNA]</scope>
    <source>
        <strain>cv. Columbia</strain>
    </source>
</reference>
<reference key="4">
    <citation type="journal article" date="2001" name="Trends Plant Sci.">
        <title>The glycine decarboxylase system: a fascinating complex.</title>
        <authorList>
            <person name="Douce R."/>
            <person name="Bourguignon J."/>
            <person name="Neuburger M."/>
            <person name="Rebeille F."/>
        </authorList>
    </citation>
    <scope>REVIEW</scope>
</reference>
<reference key="5">
    <citation type="journal article" date="2003" name="J. Exp. Bot.">
        <title>Genetic manipulation of glycine decarboxylation.</title>
        <authorList>
            <person name="Bauwe H."/>
            <person name="Kolukisaoglu U."/>
        </authorList>
    </citation>
    <scope>REVIEW</scope>
    <scope>NOMENCLATURE</scope>
</reference>
<reference key="6">
    <citation type="journal article" date="2004" name="Plant Cell">
        <title>Experimental analysis of the Arabidopsis mitochondrial proteome highlights signaling and regulatory components, provides assessment of targeting prediction programs, and indicates plant-specific mitochondrial proteins.</title>
        <authorList>
            <person name="Heazlewood J.L."/>
            <person name="Tonti-Filippini J.S."/>
            <person name="Gout A.M."/>
            <person name="Day D.A."/>
            <person name="Whelan J."/>
            <person name="Millar A.H."/>
        </authorList>
    </citation>
    <scope>IDENTIFICATION BY MASS SPECTROMETRY</scope>
    <scope>SUBCELLULAR LOCATION [LARGE SCALE ANALYSIS]</scope>
    <source>
        <strain>cv. Landsberg erecta</strain>
    </source>
</reference>
<reference key="7">
    <citation type="journal article" date="2009" name="Plant Physiol.">
        <title>Large-scale Arabidopsis phosphoproteome profiling reveals novel chloroplast kinase substrates and phosphorylation networks.</title>
        <authorList>
            <person name="Reiland S."/>
            <person name="Messerli G."/>
            <person name="Baerenfaller K."/>
            <person name="Gerrits B."/>
            <person name="Endler A."/>
            <person name="Grossmann J."/>
            <person name="Gruissem W."/>
            <person name="Baginsky S."/>
        </authorList>
    </citation>
    <scope>IDENTIFICATION BY MASS SPECTROMETRY [LARGE SCALE ANALYSIS]</scope>
</reference>
<reference key="8">
    <citation type="journal article" date="2010" name="Plant Physiol.">
        <title>Regulation of plant glycine decarboxylase by s-nitrosylation and glutathionylation.</title>
        <authorList>
            <person name="Palmieri M.C."/>
            <person name="Lindermayr C."/>
            <person name="Bauwe H."/>
            <person name="Steinhauser C."/>
            <person name="Durner J."/>
        </authorList>
    </citation>
    <scope>ACTIVITY REGULATION</scope>
    <scope>S-NITROSYLATION</scope>
    <scope>GLUTATHIONYLATION</scope>
</reference>
<reference key="9">
    <citation type="journal article" date="2015" name="Plant Physiol.">
        <title>INTERMEDIATE CLEAVAGE PEPTIDASE55 modifies enzyme amino termini and alters protein stability in Arabidopsis mitochondria.</title>
        <authorList>
            <person name="Huang S."/>
            <person name="Nelson C.J."/>
            <person name="Li L."/>
            <person name="Taylor N.L."/>
            <person name="Stroeher E."/>
            <person name="Peteriet J."/>
            <person name="Millar A.H."/>
        </authorList>
    </citation>
    <scope>IDENTIFICATION BY MASS SPECTROMETRY</scope>
    <scope>CLEAVAGE OF TRANSIT PEPTIDE AFTER PHE-35</scope>
</reference>
<sequence length="166" mass="17897">MALRMWASSTANALKLSSSASKSHLLPAFSISRCFSSVLEGLKYANSHEWVKHEGSVATIGITDHAQDHLGEVVFVELPEANSSVSKEKSFGAVESVKATSEILSPISGEVIEVNTKLTESPGLINSSPYEDGWMIKVKPSSPAELEALMGPKEYTKFCEEEDAAH</sequence>
<comment type="function">
    <text evidence="1">The glycine decarboxylase (GDC) or glycine cleavage system catalyzes the degradation of glycine. The H protein shuttles the methylamine group of glycine from the P protein to the T protein (By similarity).</text>
</comment>
<comment type="cofactor">
    <cofactor evidence="1">
        <name>(R)-lipoate</name>
        <dbReference type="ChEBI" id="CHEBI:83088"/>
    </cofactor>
    <text evidence="1">Binds 1 lipoyl cofactor covalently.</text>
</comment>
<comment type="activity regulation">
    <text evidence="5">Inhibited by harpin, S-nitrosoglutathione (GSNO), nitric oxide, N-ethylmaleimide and 5,5'-dithiobis-(2-nitrobenzoic acid).</text>
</comment>
<comment type="subunit">
    <text>The glycine cleavage system is composed of four proteins: P, T, L and H.</text>
</comment>
<comment type="subcellular location">
    <subcellularLocation>
        <location evidence="4 8">Mitochondrion</location>
    </subcellularLocation>
</comment>
<comment type="PTM">
    <text evidence="5">S-nitrosylated and/or glutathionylated at unknown positions in response to nitric oxide.</text>
</comment>
<comment type="similarity">
    <text evidence="7">Belongs to the GcvH family.</text>
</comment>
<comment type="caution">
    <text evidence="7">Was wrongly referred as Gly dehydrogenase subunit P2 in PubMed:20089767.</text>
</comment>
<evidence type="ECO:0000250" key="1"/>
<evidence type="ECO:0000250" key="2">
    <source>
        <dbReference type="UniProtKB" id="P25855"/>
    </source>
</evidence>
<evidence type="ECO:0000255" key="3">
    <source>
        <dbReference type="PROSITE-ProRule" id="PRU01066"/>
    </source>
</evidence>
<evidence type="ECO:0000269" key="4">
    <source>
    </source>
</evidence>
<evidence type="ECO:0000269" key="5">
    <source>
    </source>
</evidence>
<evidence type="ECO:0000269" key="6">
    <source>
    </source>
</evidence>
<evidence type="ECO:0000305" key="7"/>
<evidence type="ECO:0000305" key="8">
    <source>
    </source>
</evidence>
<organism>
    <name type="scientific">Arabidopsis thaliana</name>
    <name type="common">Mouse-ear cress</name>
    <dbReference type="NCBI Taxonomy" id="3702"/>
    <lineage>
        <taxon>Eukaryota</taxon>
        <taxon>Viridiplantae</taxon>
        <taxon>Streptophyta</taxon>
        <taxon>Embryophyta</taxon>
        <taxon>Tracheophyta</taxon>
        <taxon>Spermatophyta</taxon>
        <taxon>Magnoliopsida</taxon>
        <taxon>eudicotyledons</taxon>
        <taxon>Gunneridae</taxon>
        <taxon>Pentapetalae</taxon>
        <taxon>rosids</taxon>
        <taxon>malvids</taxon>
        <taxon>Brassicales</taxon>
        <taxon>Brassicaceae</taxon>
        <taxon>Camelineae</taxon>
        <taxon>Arabidopsis</taxon>
    </lineage>
</organism>
<dbReference type="EMBL" id="AC007767">
    <property type="protein sequence ID" value="AAF81345.1"/>
    <property type="molecule type" value="Genomic_DNA"/>
</dbReference>
<dbReference type="EMBL" id="CP002684">
    <property type="protein sequence ID" value="AEE31490.1"/>
    <property type="molecule type" value="Genomic_DNA"/>
</dbReference>
<dbReference type="EMBL" id="AF332465">
    <property type="protein sequence ID" value="AAG48828.1"/>
    <property type="molecule type" value="mRNA"/>
</dbReference>
<dbReference type="EMBL" id="AF385740">
    <property type="protein sequence ID" value="AAK60330.1"/>
    <property type="molecule type" value="mRNA"/>
</dbReference>
<dbReference type="EMBL" id="AY078028">
    <property type="protein sequence ID" value="AAL77729.1"/>
    <property type="molecule type" value="mRNA"/>
</dbReference>
<dbReference type="PIR" id="A86450">
    <property type="entry name" value="A86450"/>
</dbReference>
<dbReference type="RefSeq" id="NP_174525.1">
    <property type="nucleotide sequence ID" value="NM_102982.4"/>
</dbReference>
<dbReference type="SMR" id="Q9LQL0"/>
<dbReference type="BioGRID" id="25375">
    <property type="interactions" value="1"/>
</dbReference>
<dbReference type="FunCoup" id="Q9LQL0">
    <property type="interactions" value="2467"/>
</dbReference>
<dbReference type="STRING" id="3702.Q9LQL0"/>
<dbReference type="iPTMnet" id="Q9LQL0"/>
<dbReference type="MetOSite" id="Q9LQL0"/>
<dbReference type="PaxDb" id="3702-AT1G32470.1"/>
<dbReference type="ProteomicsDB" id="222031"/>
<dbReference type="EnsemblPlants" id="AT1G32470.1">
    <property type="protein sequence ID" value="AT1G32470.1"/>
    <property type="gene ID" value="AT1G32470"/>
</dbReference>
<dbReference type="GeneID" id="840141"/>
<dbReference type="Gramene" id="AT1G32470.1">
    <property type="protein sequence ID" value="AT1G32470.1"/>
    <property type="gene ID" value="AT1G32470"/>
</dbReference>
<dbReference type="KEGG" id="ath:AT1G32470"/>
<dbReference type="Araport" id="AT1G32470"/>
<dbReference type="TAIR" id="AT1G32470"/>
<dbReference type="eggNOG" id="KOG3373">
    <property type="taxonomic scope" value="Eukaryota"/>
</dbReference>
<dbReference type="HOGENOM" id="CLU_097408_1_0_1"/>
<dbReference type="InParanoid" id="Q9LQL0"/>
<dbReference type="OMA" id="HEWAKHE"/>
<dbReference type="PhylomeDB" id="Q9LQL0"/>
<dbReference type="BioCyc" id="MetaCyc:MONOMER-22024"/>
<dbReference type="BRENDA" id="1.4.1.27">
    <property type="organism ID" value="399"/>
</dbReference>
<dbReference type="PRO" id="PR:Q9LQL0"/>
<dbReference type="Proteomes" id="UP000006548">
    <property type="component" value="Chromosome 1"/>
</dbReference>
<dbReference type="ExpressionAtlas" id="Q9LQL0">
    <property type="expression patterns" value="baseline and differential"/>
</dbReference>
<dbReference type="GO" id="GO:0005829">
    <property type="term" value="C:cytosol"/>
    <property type="evidence" value="ECO:0007005"/>
    <property type="project" value="TAIR"/>
</dbReference>
<dbReference type="GO" id="GO:0005960">
    <property type="term" value="C:glycine cleavage complex"/>
    <property type="evidence" value="ECO:0007669"/>
    <property type="project" value="InterPro"/>
</dbReference>
<dbReference type="GO" id="GO:0005739">
    <property type="term" value="C:mitochondrion"/>
    <property type="evidence" value="ECO:0007005"/>
    <property type="project" value="TAIR"/>
</dbReference>
<dbReference type="GO" id="GO:0005634">
    <property type="term" value="C:nucleus"/>
    <property type="evidence" value="ECO:0007005"/>
    <property type="project" value="TAIR"/>
</dbReference>
<dbReference type="GO" id="GO:0019464">
    <property type="term" value="P:glycine decarboxylation via glycine cleavage system"/>
    <property type="evidence" value="ECO:0007669"/>
    <property type="project" value="InterPro"/>
</dbReference>
<dbReference type="CDD" id="cd06848">
    <property type="entry name" value="GCS_H"/>
    <property type="match status" value="1"/>
</dbReference>
<dbReference type="FunFam" id="2.40.50.100:FF:000011">
    <property type="entry name" value="Glycine cleavage system H protein"/>
    <property type="match status" value="1"/>
</dbReference>
<dbReference type="Gene3D" id="2.40.50.100">
    <property type="match status" value="1"/>
</dbReference>
<dbReference type="HAMAP" id="MF_00272">
    <property type="entry name" value="GcvH"/>
    <property type="match status" value="1"/>
</dbReference>
<dbReference type="InterPro" id="IPR003016">
    <property type="entry name" value="2-oxoA_DH_lipoyl-BS"/>
</dbReference>
<dbReference type="InterPro" id="IPR000089">
    <property type="entry name" value="Biotin_lipoyl"/>
</dbReference>
<dbReference type="InterPro" id="IPR002930">
    <property type="entry name" value="GCV_H"/>
</dbReference>
<dbReference type="InterPro" id="IPR033753">
    <property type="entry name" value="GCV_H/Fam206"/>
</dbReference>
<dbReference type="InterPro" id="IPR017453">
    <property type="entry name" value="GCV_H_sub"/>
</dbReference>
<dbReference type="InterPro" id="IPR011053">
    <property type="entry name" value="Single_hybrid_motif"/>
</dbReference>
<dbReference type="NCBIfam" id="TIGR00527">
    <property type="entry name" value="gcvH"/>
    <property type="match status" value="1"/>
</dbReference>
<dbReference type="NCBIfam" id="NF002270">
    <property type="entry name" value="PRK01202.1"/>
    <property type="match status" value="1"/>
</dbReference>
<dbReference type="PANTHER" id="PTHR11715">
    <property type="entry name" value="GLYCINE CLEAVAGE SYSTEM H PROTEIN"/>
    <property type="match status" value="1"/>
</dbReference>
<dbReference type="PANTHER" id="PTHR11715:SF27">
    <property type="entry name" value="GLYCINE CLEAVAGE SYSTEM H PROTEIN 1, MITOCHONDRIAL-RELATED"/>
    <property type="match status" value="1"/>
</dbReference>
<dbReference type="Pfam" id="PF01597">
    <property type="entry name" value="GCV_H"/>
    <property type="match status" value="1"/>
</dbReference>
<dbReference type="SUPFAM" id="SSF51230">
    <property type="entry name" value="Single hybrid motif"/>
    <property type="match status" value="1"/>
</dbReference>
<dbReference type="PROSITE" id="PS50968">
    <property type="entry name" value="BIOTINYL_LIPOYL"/>
    <property type="match status" value="1"/>
</dbReference>
<dbReference type="PROSITE" id="PS00189">
    <property type="entry name" value="LIPOYL"/>
    <property type="match status" value="1"/>
</dbReference>